<feature type="chain" id="PRO_1000121212" description="DNA-directed RNA polymerase subunit omega">
    <location>
        <begin position="1"/>
        <end position="75"/>
    </location>
</feature>
<accession>B8DQW7</accession>
<proteinExistence type="inferred from homology"/>
<organism>
    <name type="scientific">Nitratidesulfovibrio vulgaris (strain DSM 19637 / Miyazaki F)</name>
    <name type="common">Desulfovibrio vulgaris</name>
    <dbReference type="NCBI Taxonomy" id="883"/>
    <lineage>
        <taxon>Bacteria</taxon>
        <taxon>Pseudomonadati</taxon>
        <taxon>Thermodesulfobacteriota</taxon>
        <taxon>Desulfovibrionia</taxon>
        <taxon>Desulfovibrionales</taxon>
        <taxon>Desulfovibrionaceae</taxon>
        <taxon>Nitratidesulfovibrio</taxon>
    </lineage>
</organism>
<gene>
    <name evidence="1" type="primary">rpoZ</name>
    <name type="ordered locus">DvMF_2294</name>
</gene>
<reference key="1">
    <citation type="submission" date="2008-10" db="EMBL/GenBank/DDBJ databases">
        <title>Complete sequence of Desulfovibrio vulgaris str. 'Miyazaki F'.</title>
        <authorList>
            <person name="Lucas S."/>
            <person name="Copeland A."/>
            <person name="Lapidus A."/>
            <person name="Glavina del Rio T."/>
            <person name="Dalin E."/>
            <person name="Tice H."/>
            <person name="Bruce D."/>
            <person name="Goodwin L."/>
            <person name="Pitluck S."/>
            <person name="Sims D."/>
            <person name="Brettin T."/>
            <person name="Detter J.C."/>
            <person name="Han C."/>
            <person name="Larimer F."/>
            <person name="Land M."/>
            <person name="Hauser L."/>
            <person name="Kyrpides N."/>
            <person name="Mikhailova N."/>
            <person name="Hazen T.C."/>
            <person name="Richardson P."/>
        </authorList>
    </citation>
    <scope>NUCLEOTIDE SEQUENCE [LARGE SCALE GENOMIC DNA]</scope>
    <source>
        <strain>DSM 19637 / Miyazaki F</strain>
    </source>
</reference>
<evidence type="ECO:0000255" key="1">
    <source>
        <dbReference type="HAMAP-Rule" id="MF_00366"/>
    </source>
</evidence>
<name>RPOZ_NITV9</name>
<comment type="function">
    <text evidence="1">Promotes RNA polymerase assembly. Latches the N- and C-terminal regions of the beta' subunit thereby facilitating its interaction with the beta and alpha subunits.</text>
</comment>
<comment type="catalytic activity">
    <reaction evidence="1">
        <text>RNA(n) + a ribonucleoside 5'-triphosphate = RNA(n+1) + diphosphate</text>
        <dbReference type="Rhea" id="RHEA:21248"/>
        <dbReference type="Rhea" id="RHEA-COMP:14527"/>
        <dbReference type="Rhea" id="RHEA-COMP:17342"/>
        <dbReference type="ChEBI" id="CHEBI:33019"/>
        <dbReference type="ChEBI" id="CHEBI:61557"/>
        <dbReference type="ChEBI" id="CHEBI:140395"/>
        <dbReference type="EC" id="2.7.7.6"/>
    </reaction>
</comment>
<comment type="subunit">
    <text evidence="1">The RNAP catalytic core consists of 2 alpha, 1 beta, 1 beta' and 1 omega subunit. When a sigma factor is associated with the core the holoenzyme is formed, which can initiate transcription.</text>
</comment>
<comment type="similarity">
    <text evidence="1">Belongs to the RNA polymerase subunit omega family.</text>
</comment>
<sequence length="75" mass="8800">MARITVEDCQERVDNRFLLVQMAIKRVHQYREGYEALVDSRNKEVVTALREIAAGKVLPDEEARYVETEEDFRAE</sequence>
<keyword id="KW-0240">DNA-directed RNA polymerase</keyword>
<keyword id="KW-0548">Nucleotidyltransferase</keyword>
<keyword id="KW-0804">Transcription</keyword>
<keyword id="KW-0808">Transferase</keyword>
<dbReference type="EC" id="2.7.7.6" evidence="1"/>
<dbReference type="EMBL" id="CP001197">
    <property type="protein sequence ID" value="ACL09236.1"/>
    <property type="molecule type" value="Genomic_DNA"/>
</dbReference>
<dbReference type="SMR" id="B8DQW7"/>
<dbReference type="STRING" id="883.DvMF_2294"/>
<dbReference type="KEGG" id="dvm:DvMF_2294"/>
<dbReference type="eggNOG" id="COG1758">
    <property type="taxonomic scope" value="Bacteria"/>
</dbReference>
<dbReference type="HOGENOM" id="CLU_125406_5_1_7"/>
<dbReference type="OrthoDB" id="9796300at2"/>
<dbReference type="GO" id="GO:0000428">
    <property type="term" value="C:DNA-directed RNA polymerase complex"/>
    <property type="evidence" value="ECO:0007669"/>
    <property type="project" value="UniProtKB-KW"/>
</dbReference>
<dbReference type="GO" id="GO:0003677">
    <property type="term" value="F:DNA binding"/>
    <property type="evidence" value="ECO:0007669"/>
    <property type="project" value="UniProtKB-UniRule"/>
</dbReference>
<dbReference type="GO" id="GO:0003899">
    <property type="term" value="F:DNA-directed RNA polymerase activity"/>
    <property type="evidence" value="ECO:0007669"/>
    <property type="project" value="UniProtKB-UniRule"/>
</dbReference>
<dbReference type="GO" id="GO:0006351">
    <property type="term" value="P:DNA-templated transcription"/>
    <property type="evidence" value="ECO:0007669"/>
    <property type="project" value="UniProtKB-UniRule"/>
</dbReference>
<dbReference type="Gene3D" id="3.90.940.10">
    <property type="match status" value="1"/>
</dbReference>
<dbReference type="HAMAP" id="MF_00366">
    <property type="entry name" value="RNApol_bact_RpoZ"/>
    <property type="match status" value="1"/>
</dbReference>
<dbReference type="InterPro" id="IPR003716">
    <property type="entry name" value="DNA-dir_RNA_pol_omega"/>
</dbReference>
<dbReference type="InterPro" id="IPR006110">
    <property type="entry name" value="Pol_omega/Rpo6/RPB6"/>
</dbReference>
<dbReference type="InterPro" id="IPR036161">
    <property type="entry name" value="RPB6/omega-like_sf"/>
</dbReference>
<dbReference type="NCBIfam" id="TIGR00690">
    <property type="entry name" value="rpoZ"/>
    <property type="match status" value="1"/>
</dbReference>
<dbReference type="PANTHER" id="PTHR34476">
    <property type="entry name" value="DNA-DIRECTED RNA POLYMERASE SUBUNIT OMEGA"/>
    <property type="match status" value="1"/>
</dbReference>
<dbReference type="PANTHER" id="PTHR34476:SF1">
    <property type="entry name" value="DNA-DIRECTED RNA POLYMERASE SUBUNIT OMEGA"/>
    <property type="match status" value="1"/>
</dbReference>
<dbReference type="Pfam" id="PF01192">
    <property type="entry name" value="RNA_pol_Rpb6"/>
    <property type="match status" value="1"/>
</dbReference>
<dbReference type="SMART" id="SM01409">
    <property type="entry name" value="RNA_pol_Rpb6"/>
    <property type="match status" value="1"/>
</dbReference>
<dbReference type="SUPFAM" id="SSF63562">
    <property type="entry name" value="RPB6/omega subunit-like"/>
    <property type="match status" value="1"/>
</dbReference>
<protein>
    <recommendedName>
        <fullName evidence="1">DNA-directed RNA polymerase subunit omega</fullName>
        <shortName evidence="1">RNAP omega subunit</shortName>
        <ecNumber evidence="1">2.7.7.6</ecNumber>
    </recommendedName>
    <alternativeName>
        <fullName evidence="1">RNA polymerase omega subunit</fullName>
    </alternativeName>
    <alternativeName>
        <fullName evidence="1">Transcriptase subunit omega</fullName>
    </alternativeName>
</protein>